<evidence type="ECO:0000255" key="1">
    <source>
        <dbReference type="HAMAP-Rule" id="MF_00291"/>
    </source>
</evidence>
<evidence type="ECO:0000256" key="2">
    <source>
        <dbReference type="SAM" id="MobiDB-lite"/>
    </source>
</evidence>
<evidence type="ECO:0000305" key="3"/>
<keyword id="KW-1185">Reference proteome</keyword>
<keyword id="KW-0687">Ribonucleoprotein</keyword>
<keyword id="KW-0689">Ribosomal protein</keyword>
<sequence length="276" mass="30689">MAVVTMRELLDAGVHFGHQTRRWNPKMRRFIFTERNGIYIIDLQQTLTYIDQAFEFVKETVAHGGTILFVGTKKQAQEAVQVEAERVGMPYVNHRWLGGMLTNFQTVSKRLHRMKELQAMDAAEDGYEGRTKRETLMLTRERVKLERVLSGIADMSRIPSALWIIDTNKEHIAVAEAHKLNIPVVAILDTNCDPDVVDYPVPGNDDAIRATALLSRVISTAVEEGKKAREERQLAAAREAAGEPKSEDAPAEAAATEEAPATEAPAAEAQQENAAE</sequence>
<reference key="1">
    <citation type="journal article" date="2003" name="Genome Res.">
        <title>Comparative complete genome sequence analysis of the amino acid replacements responsible for the thermostability of Corynebacterium efficiens.</title>
        <authorList>
            <person name="Nishio Y."/>
            <person name="Nakamura Y."/>
            <person name="Kawarabayasi Y."/>
            <person name="Usuda Y."/>
            <person name="Kimura E."/>
            <person name="Sugimoto S."/>
            <person name="Matsui K."/>
            <person name="Yamagishi A."/>
            <person name="Kikuchi H."/>
            <person name="Ikeo K."/>
            <person name="Gojobori T."/>
        </authorList>
    </citation>
    <scope>NUCLEOTIDE SEQUENCE [LARGE SCALE GENOMIC DNA]</scope>
    <source>
        <strain>DSM 44549 / YS-314 / AJ 12310 / JCM 11189 / NBRC 100395</strain>
    </source>
</reference>
<comment type="similarity">
    <text evidence="1">Belongs to the universal ribosomal protein uS2 family.</text>
</comment>
<organism>
    <name type="scientific">Corynebacterium efficiens (strain DSM 44549 / YS-314 / AJ 12310 / JCM 11189 / NBRC 100395)</name>
    <dbReference type="NCBI Taxonomy" id="196164"/>
    <lineage>
        <taxon>Bacteria</taxon>
        <taxon>Bacillati</taxon>
        <taxon>Actinomycetota</taxon>
        <taxon>Actinomycetes</taxon>
        <taxon>Mycobacteriales</taxon>
        <taxon>Corynebacteriaceae</taxon>
        <taxon>Corynebacterium</taxon>
    </lineage>
</organism>
<dbReference type="EMBL" id="BA000035">
    <property type="protein sequence ID" value="BAC18725.1"/>
    <property type="molecule type" value="Genomic_DNA"/>
</dbReference>
<dbReference type="RefSeq" id="WP_006767916.1">
    <property type="nucleotide sequence ID" value="NC_004369.1"/>
</dbReference>
<dbReference type="SMR" id="Q8FP70"/>
<dbReference type="STRING" id="196164.gene:10742343"/>
<dbReference type="KEGG" id="cef:CE1915"/>
<dbReference type="eggNOG" id="COG0052">
    <property type="taxonomic scope" value="Bacteria"/>
</dbReference>
<dbReference type="HOGENOM" id="CLU_040318_2_2_11"/>
<dbReference type="OrthoDB" id="9808036at2"/>
<dbReference type="Proteomes" id="UP000001409">
    <property type="component" value="Chromosome"/>
</dbReference>
<dbReference type="GO" id="GO:0022627">
    <property type="term" value="C:cytosolic small ribosomal subunit"/>
    <property type="evidence" value="ECO:0007669"/>
    <property type="project" value="TreeGrafter"/>
</dbReference>
<dbReference type="GO" id="GO:0003735">
    <property type="term" value="F:structural constituent of ribosome"/>
    <property type="evidence" value="ECO:0007669"/>
    <property type="project" value="InterPro"/>
</dbReference>
<dbReference type="GO" id="GO:0006412">
    <property type="term" value="P:translation"/>
    <property type="evidence" value="ECO:0007669"/>
    <property type="project" value="UniProtKB-UniRule"/>
</dbReference>
<dbReference type="CDD" id="cd01425">
    <property type="entry name" value="RPS2"/>
    <property type="match status" value="1"/>
</dbReference>
<dbReference type="FunFam" id="1.10.287.610:FF:000001">
    <property type="entry name" value="30S ribosomal protein S2"/>
    <property type="match status" value="1"/>
</dbReference>
<dbReference type="Gene3D" id="3.40.50.10490">
    <property type="entry name" value="Glucose-6-phosphate isomerase like protein, domain 1"/>
    <property type="match status" value="1"/>
</dbReference>
<dbReference type="Gene3D" id="1.10.287.610">
    <property type="entry name" value="Helix hairpin bin"/>
    <property type="match status" value="1"/>
</dbReference>
<dbReference type="HAMAP" id="MF_00291_B">
    <property type="entry name" value="Ribosomal_uS2_B"/>
    <property type="match status" value="1"/>
</dbReference>
<dbReference type="InterPro" id="IPR001865">
    <property type="entry name" value="Ribosomal_uS2"/>
</dbReference>
<dbReference type="InterPro" id="IPR005706">
    <property type="entry name" value="Ribosomal_uS2_bac/mit/plastid"/>
</dbReference>
<dbReference type="InterPro" id="IPR018130">
    <property type="entry name" value="Ribosomal_uS2_CS"/>
</dbReference>
<dbReference type="InterPro" id="IPR023591">
    <property type="entry name" value="Ribosomal_uS2_flav_dom_sf"/>
</dbReference>
<dbReference type="NCBIfam" id="TIGR01011">
    <property type="entry name" value="rpsB_bact"/>
    <property type="match status" value="1"/>
</dbReference>
<dbReference type="PANTHER" id="PTHR12534">
    <property type="entry name" value="30S RIBOSOMAL PROTEIN S2 PROKARYOTIC AND ORGANELLAR"/>
    <property type="match status" value="1"/>
</dbReference>
<dbReference type="PANTHER" id="PTHR12534:SF0">
    <property type="entry name" value="SMALL RIBOSOMAL SUBUNIT PROTEIN US2M"/>
    <property type="match status" value="1"/>
</dbReference>
<dbReference type="Pfam" id="PF00318">
    <property type="entry name" value="Ribosomal_S2"/>
    <property type="match status" value="1"/>
</dbReference>
<dbReference type="PRINTS" id="PR00395">
    <property type="entry name" value="RIBOSOMALS2"/>
</dbReference>
<dbReference type="SUPFAM" id="SSF52313">
    <property type="entry name" value="Ribosomal protein S2"/>
    <property type="match status" value="1"/>
</dbReference>
<dbReference type="PROSITE" id="PS00962">
    <property type="entry name" value="RIBOSOMAL_S2_1"/>
    <property type="match status" value="1"/>
</dbReference>
<proteinExistence type="inferred from homology"/>
<accession>Q8FP70</accession>
<gene>
    <name evidence="1" type="primary">rpsB</name>
    <name type="ordered locus">CE1915</name>
</gene>
<protein>
    <recommendedName>
        <fullName evidence="1">Small ribosomal subunit protein uS2</fullName>
    </recommendedName>
    <alternativeName>
        <fullName evidence="3">30S ribosomal protein S2</fullName>
    </alternativeName>
</protein>
<feature type="chain" id="PRO_0000134160" description="Small ribosomal subunit protein uS2">
    <location>
        <begin position="1"/>
        <end position="276"/>
    </location>
</feature>
<feature type="region of interest" description="Disordered" evidence="2">
    <location>
        <begin position="226"/>
        <end position="276"/>
    </location>
</feature>
<feature type="compositionally biased region" description="Low complexity" evidence="2">
    <location>
        <begin position="251"/>
        <end position="276"/>
    </location>
</feature>
<name>RS2_COREF</name>